<organism>
    <name type="scientific">Danio rerio</name>
    <name type="common">Zebrafish</name>
    <name type="synonym">Brachydanio rerio</name>
    <dbReference type="NCBI Taxonomy" id="7955"/>
    <lineage>
        <taxon>Eukaryota</taxon>
        <taxon>Metazoa</taxon>
        <taxon>Chordata</taxon>
        <taxon>Craniata</taxon>
        <taxon>Vertebrata</taxon>
        <taxon>Euteleostomi</taxon>
        <taxon>Actinopterygii</taxon>
        <taxon>Neopterygii</taxon>
        <taxon>Teleostei</taxon>
        <taxon>Ostariophysi</taxon>
        <taxon>Cypriniformes</taxon>
        <taxon>Danionidae</taxon>
        <taxon>Danioninae</taxon>
        <taxon>Danio</taxon>
    </lineage>
</organism>
<sequence>MRGDRGRGRGGRFGSRGGLVQGYRPFVPHIPFDFYVCEMAFPRVKPASDETAFSECLLKRNQDLSPTPSEQASILSLVTKINNVIDNLIVAPGNFEVQIEEVRQVGSYKKGTMTAGHNVADLVVILKILPTLEAVAALGNKVVETLRTQDPSEVLSMLTNETGFEISSADATVKILITTVPPNLRKLDPELHLDIKVLQSALAAIRHARWFEENASQSTVKVLIRLLKDIRVRFPGFEPLTPWILDLLGHSAVMNHPSRQPLPLNVAYRRCLQMLAAGLFLPGSVGITDPCESGNFRVHTVMTLEQQDMVCFTAQTLVRVLSHGGYRKILGLEGDASYLTTEMSTWDGVIVTPSEKAYEKPPERKEEEDEALEEGVEAEDESMETQE</sequence>
<feature type="chain" id="PRO_0000126067" description="Interleukin enhancer-binding factor 2 homolog">
    <location>
        <begin position="1"/>
        <end position="387"/>
    </location>
</feature>
<feature type="domain" description="DZF" evidence="2">
    <location>
        <begin position="24"/>
        <end position="371"/>
    </location>
</feature>
<feature type="region of interest" description="Disordered" evidence="3">
    <location>
        <begin position="352"/>
        <end position="387"/>
    </location>
</feature>
<feature type="compositionally biased region" description="Basic and acidic residues" evidence="3">
    <location>
        <begin position="356"/>
        <end position="365"/>
    </location>
</feature>
<feature type="compositionally biased region" description="Acidic residues" evidence="3">
    <location>
        <begin position="366"/>
        <end position="387"/>
    </location>
</feature>
<proteinExistence type="evidence at transcript level"/>
<comment type="function">
    <text evidence="1">Appears to function predominantly as a heterodimeric complex with ILF3. This complex may function to regulate transcription of undefined genes (By similarity).</text>
</comment>
<comment type="subunit">
    <text evidence="1">Forms heterodimers with ILF3.</text>
</comment>
<comment type="subcellular location">
    <subcellularLocation>
        <location evidence="1">Nucleus</location>
    </subcellularLocation>
</comment>
<dbReference type="EMBL" id="BC066394">
    <property type="protein sequence ID" value="AAH66394.1"/>
    <property type="molecule type" value="mRNA"/>
</dbReference>
<dbReference type="EMBL" id="BC059456">
    <property type="protein sequence ID" value="AAH59456.1"/>
    <property type="molecule type" value="mRNA"/>
</dbReference>
<dbReference type="RefSeq" id="NP_998401.1">
    <property type="nucleotide sequence ID" value="NM_213236.2"/>
</dbReference>
<dbReference type="SMR" id="Q6NZ06"/>
<dbReference type="FunCoup" id="Q6NZ06">
    <property type="interactions" value="3739"/>
</dbReference>
<dbReference type="STRING" id="7955.ENSDARP00000022486"/>
<dbReference type="PaxDb" id="7955-ENSDARP00000022486"/>
<dbReference type="Ensembl" id="ENSDART00000018255">
    <property type="protein sequence ID" value="ENSDARP00000022486"/>
    <property type="gene ID" value="ENSDARG00000014591"/>
</dbReference>
<dbReference type="GeneID" id="406517"/>
<dbReference type="KEGG" id="dre:406517"/>
<dbReference type="AGR" id="ZFIN:ZDB-GENE-040426-2345"/>
<dbReference type="CTD" id="3608"/>
<dbReference type="ZFIN" id="ZDB-GENE-040426-2345">
    <property type="gene designation" value="ilf2"/>
</dbReference>
<dbReference type="eggNOG" id="KOG3793">
    <property type="taxonomic scope" value="Eukaryota"/>
</dbReference>
<dbReference type="HOGENOM" id="CLU_064863_1_0_1"/>
<dbReference type="InParanoid" id="Q6NZ06"/>
<dbReference type="OMA" id="YLAIEMS"/>
<dbReference type="OrthoDB" id="5775647at2759"/>
<dbReference type="PhylomeDB" id="Q6NZ06"/>
<dbReference type="TreeFam" id="TF320194"/>
<dbReference type="Reactome" id="R-DRE-6798695">
    <property type="pathway name" value="Neutrophil degranulation"/>
</dbReference>
<dbReference type="Reactome" id="R-DRE-9833482">
    <property type="pathway name" value="PKR-mediated signaling"/>
</dbReference>
<dbReference type="PRO" id="PR:Q6NZ06"/>
<dbReference type="Proteomes" id="UP000000437">
    <property type="component" value="Chromosome 19"/>
</dbReference>
<dbReference type="Bgee" id="ENSDARG00000014591">
    <property type="expression patterns" value="Expressed in mature ovarian follicle and 28 other cell types or tissues"/>
</dbReference>
<dbReference type="GO" id="GO:0005730">
    <property type="term" value="C:nucleolus"/>
    <property type="evidence" value="ECO:0000250"/>
    <property type="project" value="UniProtKB"/>
</dbReference>
<dbReference type="GO" id="GO:0005634">
    <property type="term" value="C:nucleus"/>
    <property type="evidence" value="ECO:0000250"/>
    <property type="project" value="UniProtKB"/>
</dbReference>
<dbReference type="GO" id="GO:0003677">
    <property type="term" value="F:DNA binding"/>
    <property type="evidence" value="ECO:0000250"/>
    <property type="project" value="UniProtKB"/>
</dbReference>
<dbReference type="GO" id="GO:0003725">
    <property type="term" value="F:double-stranded RNA binding"/>
    <property type="evidence" value="ECO:0000250"/>
    <property type="project" value="UniProtKB"/>
</dbReference>
<dbReference type="GO" id="GO:0045893">
    <property type="term" value="P:positive regulation of DNA-templated transcription"/>
    <property type="evidence" value="ECO:0000250"/>
    <property type="project" value="UniProtKB"/>
</dbReference>
<dbReference type="FunFam" id="1.10.1410.40:FF:000004">
    <property type="entry name" value="Interleukin enhancer-binding factor 2"/>
    <property type="match status" value="1"/>
</dbReference>
<dbReference type="FunFam" id="1.10.1410.40:FF:000010">
    <property type="entry name" value="Interleukin enhancer-binding factor 2"/>
    <property type="match status" value="1"/>
</dbReference>
<dbReference type="FunFam" id="3.30.460.10:FF:000093">
    <property type="entry name" value="Interleukin enhancer-binding factor 2"/>
    <property type="match status" value="1"/>
</dbReference>
<dbReference type="Gene3D" id="1.10.1410.40">
    <property type="match status" value="1"/>
</dbReference>
<dbReference type="Gene3D" id="3.30.460.10">
    <property type="entry name" value="Beta Polymerase, domain 2"/>
    <property type="match status" value="1"/>
</dbReference>
<dbReference type="InterPro" id="IPR006561">
    <property type="entry name" value="DZF_dom"/>
</dbReference>
<dbReference type="InterPro" id="IPR049402">
    <property type="entry name" value="DZF_dom_C"/>
</dbReference>
<dbReference type="InterPro" id="IPR049401">
    <property type="entry name" value="DZF_dom_N"/>
</dbReference>
<dbReference type="InterPro" id="IPR052134">
    <property type="entry name" value="ILF2"/>
</dbReference>
<dbReference type="InterPro" id="IPR043519">
    <property type="entry name" value="NT_sf"/>
</dbReference>
<dbReference type="PANTHER" id="PTHR46447">
    <property type="entry name" value="INTERLEUKIN ENHANCER-BINDING FACTOR"/>
    <property type="match status" value="1"/>
</dbReference>
<dbReference type="PANTHER" id="PTHR46447:SF1">
    <property type="entry name" value="INTERLEUKIN ENHANCER-BINDING FACTOR 2"/>
    <property type="match status" value="1"/>
</dbReference>
<dbReference type="Pfam" id="PF20965">
    <property type="entry name" value="DZF_C"/>
    <property type="match status" value="1"/>
</dbReference>
<dbReference type="Pfam" id="PF07528">
    <property type="entry name" value="DZF_N"/>
    <property type="match status" value="1"/>
</dbReference>
<dbReference type="SMART" id="SM00572">
    <property type="entry name" value="DZF"/>
    <property type="match status" value="1"/>
</dbReference>
<dbReference type="SUPFAM" id="SSF81301">
    <property type="entry name" value="Nucleotidyltransferase"/>
    <property type="match status" value="1"/>
</dbReference>
<dbReference type="PROSITE" id="PS51703">
    <property type="entry name" value="DZF"/>
    <property type="match status" value="1"/>
</dbReference>
<keyword id="KW-0010">Activator</keyword>
<keyword id="KW-0238">DNA-binding</keyword>
<keyword id="KW-0539">Nucleus</keyword>
<keyword id="KW-1185">Reference proteome</keyword>
<keyword id="KW-0804">Transcription</keyword>
<keyword id="KW-0805">Transcription regulation</keyword>
<name>ILF2_DANRE</name>
<reference key="1">
    <citation type="submission" date="2003-10" db="EMBL/GenBank/DDBJ databases">
        <authorList>
            <consortium name="NIH - Zebrafish Gene Collection (ZGC) project"/>
        </authorList>
    </citation>
    <scope>NUCLEOTIDE SEQUENCE [LARGE SCALE MRNA]</scope>
    <source>
        <tissue>Eye</tissue>
    </source>
</reference>
<gene>
    <name type="primary">ilf2</name>
</gene>
<protein>
    <recommendedName>
        <fullName>Interleukin enhancer-binding factor 2 homolog</fullName>
    </recommendedName>
</protein>
<accession>Q6NZ06</accession>
<evidence type="ECO:0000250" key="1"/>
<evidence type="ECO:0000255" key="2">
    <source>
        <dbReference type="PROSITE-ProRule" id="PRU01040"/>
    </source>
</evidence>
<evidence type="ECO:0000256" key="3">
    <source>
        <dbReference type="SAM" id="MobiDB-lite"/>
    </source>
</evidence>